<proteinExistence type="inferred from homology"/>
<accession>A5U4G5</accession>
<evidence type="ECO:0000255" key="1">
    <source>
        <dbReference type="HAMAP-Rule" id="MF_00225"/>
    </source>
</evidence>
<sequence length="357" mass="37999">MYPLVRRLLFLIPPEHAHKLVFAVLRGVAAVAPVRRLLRRLLGPTDPVLASTVFGVRFPAPLGLAAGFDKDGTALSSWGAMGFGYAEIGTVTAHPQPGNPAPRLFRLADDRALLNRMGFNNHGARALAIRLARHRPEIPIGVNIGKTKKTPAGDAVNDYRASARMVGPLASYLVVNVSSPNTPGLRDLQAVESLRPILSAVRAETSTPVLVKIAPDLSDSDLDDIADLAVELDLAGIVATNTTVSRDGLTTPGVDRLGPGGISGPPLAQRAVQVLRRLYDRVGDRLALISVGGIETADDAWERITAGASLLQGYTGFIYGGERWAKDIHEGIARRLHDGGFGSLHEAVGSARRRQPS</sequence>
<feature type="chain" id="PRO_1000024186" description="Dihydroorotate dehydrogenase (quinone)">
    <location>
        <begin position="1"/>
        <end position="357"/>
    </location>
</feature>
<feature type="active site" description="Nucleophile" evidence="1">
    <location>
        <position position="179"/>
    </location>
</feature>
<feature type="binding site" evidence="1">
    <location>
        <begin position="66"/>
        <end position="70"/>
    </location>
    <ligand>
        <name>FMN</name>
        <dbReference type="ChEBI" id="CHEBI:58210"/>
    </ligand>
</feature>
<feature type="binding site" evidence="1">
    <location>
        <position position="70"/>
    </location>
    <ligand>
        <name>substrate</name>
    </ligand>
</feature>
<feature type="binding site" evidence="1">
    <location>
        <position position="90"/>
    </location>
    <ligand>
        <name>FMN</name>
        <dbReference type="ChEBI" id="CHEBI:58210"/>
    </ligand>
</feature>
<feature type="binding site" evidence="1">
    <location>
        <begin position="115"/>
        <end position="119"/>
    </location>
    <ligand>
        <name>substrate</name>
    </ligand>
</feature>
<feature type="binding site" evidence="1">
    <location>
        <position position="143"/>
    </location>
    <ligand>
        <name>FMN</name>
        <dbReference type="ChEBI" id="CHEBI:58210"/>
    </ligand>
</feature>
<feature type="binding site" evidence="1">
    <location>
        <position position="176"/>
    </location>
    <ligand>
        <name>FMN</name>
        <dbReference type="ChEBI" id="CHEBI:58210"/>
    </ligand>
</feature>
<feature type="binding site" evidence="1">
    <location>
        <position position="176"/>
    </location>
    <ligand>
        <name>substrate</name>
    </ligand>
</feature>
<feature type="binding site" evidence="1">
    <location>
        <position position="181"/>
    </location>
    <ligand>
        <name>substrate</name>
    </ligand>
</feature>
<feature type="binding site" evidence="1">
    <location>
        <position position="212"/>
    </location>
    <ligand>
        <name>FMN</name>
        <dbReference type="ChEBI" id="CHEBI:58210"/>
    </ligand>
</feature>
<feature type="binding site" evidence="1">
    <location>
        <position position="240"/>
    </location>
    <ligand>
        <name>FMN</name>
        <dbReference type="ChEBI" id="CHEBI:58210"/>
    </ligand>
</feature>
<feature type="binding site" evidence="1">
    <location>
        <begin position="241"/>
        <end position="242"/>
    </location>
    <ligand>
        <name>substrate</name>
    </ligand>
</feature>
<feature type="binding site" evidence="1">
    <location>
        <position position="264"/>
    </location>
    <ligand>
        <name>FMN</name>
        <dbReference type="ChEBI" id="CHEBI:58210"/>
    </ligand>
</feature>
<feature type="binding site" evidence="1">
    <location>
        <position position="293"/>
    </location>
    <ligand>
        <name>FMN</name>
        <dbReference type="ChEBI" id="CHEBI:58210"/>
    </ligand>
</feature>
<feature type="binding site" evidence="1">
    <location>
        <begin position="314"/>
        <end position="315"/>
    </location>
    <ligand>
        <name>FMN</name>
        <dbReference type="ChEBI" id="CHEBI:58210"/>
    </ligand>
</feature>
<keyword id="KW-1003">Cell membrane</keyword>
<keyword id="KW-0285">Flavoprotein</keyword>
<keyword id="KW-0288">FMN</keyword>
<keyword id="KW-0472">Membrane</keyword>
<keyword id="KW-0560">Oxidoreductase</keyword>
<keyword id="KW-0665">Pyrimidine biosynthesis</keyword>
<keyword id="KW-1185">Reference proteome</keyword>
<dbReference type="EC" id="1.3.5.2" evidence="1"/>
<dbReference type="EMBL" id="CP000611">
    <property type="protein sequence ID" value="ABQ73915.1"/>
    <property type="molecule type" value="Genomic_DNA"/>
</dbReference>
<dbReference type="RefSeq" id="WP_003411116.1">
    <property type="nucleotide sequence ID" value="NZ_CP016972.1"/>
</dbReference>
<dbReference type="SMR" id="A5U4G5"/>
<dbReference type="KEGG" id="mra:MRA_2153"/>
<dbReference type="eggNOG" id="COG0167">
    <property type="taxonomic scope" value="Bacteria"/>
</dbReference>
<dbReference type="HOGENOM" id="CLU_013640_2_0_11"/>
<dbReference type="UniPathway" id="UPA00070">
    <property type="reaction ID" value="UER00946"/>
</dbReference>
<dbReference type="Proteomes" id="UP000001988">
    <property type="component" value="Chromosome"/>
</dbReference>
<dbReference type="GO" id="GO:0005737">
    <property type="term" value="C:cytoplasm"/>
    <property type="evidence" value="ECO:0007669"/>
    <property type="project" value="InterPro"/>
</dbReference>
<dbReference type="GO" id="GO:0005886">
    <property type="term" value="C:plasma membrane"/>
    <property type="evidence" value="ECO:0007669"/>
    <property type="project" value="UniProtKB-SubCell"/>
</dbReference>
<dbReference type="GO" id="GO:0106430">
    <property type="term" value="F:dihydroorotate dehydrogenase (quinone) activity"/>
    <property type="evidence" value="ECO:0007669"/>
    <property type="project" value="UniProtKB-EC"/>
</dbReference>
<dbReference type="GO" id="GO:0006207">
    <property type="term" value="P:'de novo' pyrimidine nucleobase biosynthetic process"/>
    <property type="evidence" value="ECO:0007669"/>
    <property type="project" value="InterPro"/>
</dbReference>
<dbReference type="GO" id="GO:0044205">
    <property type="term" value="P:'de novo' UMP biosynthetic process"/>
    <property type="evidence" value="ECO:0007669"/>
    <property type="project" value="UniProtKB-UniRule"/>
</dbReference>
<dbReference type="CDD" id="cd04738">
    <property type="entry name" value="DHOD_2_like"/>
    <property type="match status" value="1"/>
</dbReference>
<dbReference type="FunFam" id="3.20.20.70:FF:000123">
    <property type="entry name" value="Dihydroorotate dehydrogenase (quinone)"/>
    <property type="match status" value="1"/>
</dbReference>
<dbReference type="Gene3D" id="3.20.20.70">
    <property type="entry name" value="Aldolase class I"/>
    <property type="match status" value="1"/>
</dbReference>
<dbReference type="HAMAP" id="MF_00225">
    <property type="entry name" value="DHO_dh_type2"/>
    <property type="match status" value="1"/>
</dbReference>
<dbReference type="InterPro" id="IPR013785">
    <property type="entry name" value="Aldolase_TIM"/>
</dbReference>
<dbReference type="InterPro" id="IPR050074">
    <property type="entry name" value="DHO_dehydrogenase"/>
</dbReference>
<dbReference type="InterPro" id="IPR005719">
    <property type="entry name" value="Dihydroorotate_DH_2"/>
</dbReference>
<dbReference type="InterPro" id="IPR005720">
    <property type="entry name" value="Dihydroorotate_DH_cat"/>
</dbReference>
<dbReference type="InterPro" id="IPR001295">
    <property type="entry name" value="Dihydroorotate_DH_CS"/>
</dbReference>
<dbReference type="NCBIfam" id="NF003645">
    <property type="entry name" value="PRK05286.1-2"/>
    <property type="match status" value="1"/>
</dbReference>
<dbReference type="NCBIfam" id="NF003648">
    <property type="entry name" value="PRK05286.2-1"/>
    <property type="match status" value="1"/>
</dbReference>
<dbReference type="NCBIfam" id="NF003652">
    <property type="entry name" value="PRK05286.2-5"/>
    <property type="match status" value="1"/>
</dbReference>
<dbReference type="NCBIfam" id="TIGR01036">
    <property type="entry name" value="pyrD_sub2"/>
    <property type="match status" value="1"/>
</dbReference>
<dbReference type="PANTHER" id="PTHR48109:SF4">
    <property type="entry name" value="DIHYDROOROTATE DEHYDROGENASE (QUINONE), MITOCHONDRIAL"/>
    <property type="match status" value="1"/>
</dbReference>
<dbReference type="PANTHER" id="PTHR48109">
    <property type="entry name" value="DIHYDROOROTATE DEHYDROGENASE (QUINONE), MITOCHONDRIAL-RELATED"/>
    <property type="match status" value="1"/>
</dbReference>
<dbReference type="Pfam" id="PF01180">
    <property type="entry name" value="DHO_dh"/>
    <property type="match status" value="1"/>
</dbReference>
<dbReference type="SUPFAM" id="SSF51395">
    <property type="entry name" value="FMN-linked oxidoreductases"/>
    <property type="match status" value="1"/>
</dbReference>
<dbReference type="PROSITE" id="PS00911">
    <property type="entry name" value="DHODEHASE_1"/>
    <property type="match status" value="1"/>
</dbReference>
<dbReference type="PROSITE" id="PS00912">
    <property type="entry name" value="DHODEHASE_2"/>
    <property type="match status" value="1"/>
</dbReference>
<name>PYRD_MYCTA</name>
<protein>
    <recommendedName>
        <fullName evidence="1">Dihydroorotate dehydrogenase (quinone)</fullName>
        <ecNumber evidence="1">1.3.5.2</ecNumber>
    </recommendedName>
    <alternativeName>
        <fullName evidence="1">DHOdehase</fullName>
        <shortName evidence="1">DHOD</shortName>
        <shortName evidence="1">DHODase</shortName>
    </alternativeName>
    <alternativeName>
        <fullName evidence="1">Dihydroorotate oxidase</fullName>
    </alternativeName>
</protein>
<gene>
    <name evidence="1" type="primary">pyrD</name>
    <name type="ordered locus">MRA_2153</name>
</gene>
<organism>
    <name type="scientific">Mycobacterium tuberculosis (strain ATCC 25177 / H37Ra)</name>
    <dbReference type="NCBI Taxonomy" id="419947"/>
    <lineage>
        <taxon>Bacteria</taxon>
        <taxon>Bacillati</taxon>
        <taxon>Actinomycetota</taxon>
        <taxon>Actinomycetes</taxon>
        <taxon>Mycobacteriales</taxon>
        <taxon>Mycobacteriaceae</taxon>
        <taxon>Mycobacterium</taxon>
        <taxon>Mycobacterium tuberculosis complex</taxon>
    </lineage>
</organism>
<comment type="function">
    <text evidence="1">Catalyzes the conversion of dihydroorotate to orotate with quinone as electron acceptor.</text>
</comment>
<comment type="catalytic activity">
    <reaction evidence="1">
        <text>(S)-dihydroorotate + a quinone = orotate + a quinol</text>
        <dbReference type="Rhea" id="RHEA:30187"/>
        <dbReference type="ChEBI" id="CHEBI:24646"/>
        <dbReference type="ChEBI" id="CHEBI:30839"/>
        <dbReference type="ChEBI" id="CHEBI:30864"/>
        <dbReference type="ChEBI" id="CHEBI:132124"/>
        <dbReference type="EC" id="1.3.5.2"/>
    </reaction>
</comment>
<comment type="cofactor">
    <cofactor evidence="1">
        <name>FMN</name>
        <dbReference type="ChEBI" id="CHEBI:58210"/>
    </cofactor>
    <text evidence="1">Binds 1 FMN per subunit.</text>
</comment>
<comment type="pathway">
    <text evidence="1">Pyrimidine metabolism; UMP biosynthesis via de novo pathway; orotate from (S)-dihydroorotate (quinone route): step 1/1.</text>
</comment>
<comment type="subunit">
    <text evidence="1">Monomer.</text>
</comment>
<comment type="subcellular location">
    <subcellularLocation>
        <location evidence="1">Cell membrane</location>
        <topology evidence="1">Peripheral membrane protein</topology>
    </subcellularLocation>
</comment>
<comment type="similarity">
    <text evidence="1">Belongs to the dihydroorotate dehydrogenase family. Type 2 subfamily.</text>
</comment>
<reference key="1">
    <citation type="journal article" date="2008" name="PLoS ONE">
        <title>Genetic basis of virulence attenuation revealed by comparative genomic analysis of Mycobacterium tuberculosis strain H37Ra versus H37Rv.</title>
        <authorList>
            <person name="Zheng H."/>
            <person name="Lu L."/>
            <person name="Wang B."/>
            <person name="Pu S."/>
            <person name="Zhang X."/>
            <person name="Zhu G."/>
            <person name="Shi W."/>
            <person name="Zhang L."/>
            <person name="Wang H."/>
            <person name="Wang S."/>
            <person name="Zhao G."/>
            <person name="Zhang Y."/>
        </authorList>
    </citation>
    <scope>NUCLEOTIDE SEQUENCE [LARGE SCALE GENOMIC DNA]</scope>
    <source>
        <strain>ATCC 25177 / H37Ra</strain>
    </source>
</reference>